<name>RAD14_SCHPO</name>
<organism>
    <name type="scientific">Schizosaccharomyces pombe (strain 972 / ATCC 24843)</name>
    <name type="common">Fission yeast</name>
    <dbReference type="NCBI Taxonomy" id="284812"/>
    <lineage>
        <taxon>Eukaryota</taxon>
        <taxon>Fungi</taxon>
        <taxon>Dikarya</taxon>
        <taxon>Ascomycota</taxon>
        <taxon>Taphrinomycotina</taxon>
        <taxon>Schizosaccharomycetes</taxon>
        <taxon>Schizosaccharomycetales</taxon>
        <taxon>Schizosaccharomycetaceae</taxon>
        <taxon>Schizosaccharomyces</taxon>
    </lineage>
</organism>
<accession>O59753</accession>
<sequence>MENSSIVKSPNPTIEEQRNEIEKLKNLTGIEEVHVDGAKVNKRKRTFDEQSEITKDYIEYDFSKIEDTKGGYLLEEKKVEDLREKPAERELREQEERQKKLRLAPLNLDPETAPKCFECDSIELDTKYFDIFHCRVCHTCREKYPDKYSLLTKTECKLDYLLTEPELQDQELLPRLLKANPHQQGWSNMMLYLRYQVEEFAKKKWGSMEALDAEFERREVQKKEMKEKKFEKQLLELRKRTRTSNYSRMSIREKRKHVHSYDEEFEKPNEPGVIVQRCKCGLEIEQLEI</sequence>
<keyword id="KW-0227">DNA damage</keyword>
<keyword id="KW-0234">DNA repair</keyword>
<keyword id="KW-0238">DNA-binding</keyword>
<keyword id="KW-0479">Metal-binding</keyword>
<keyword id="KW-0539">Nucleus</keyword>
<keyword id="KW-1185">Reference proteome</keyword>
<keyword id="KW-0862">Zinc</keyword>
<keyword id="KW-0863">Zinc-finger</keyword>
<reference key="1">
    <citation type="journal article" date="2002" name="Nature">
        <title>The genome sequence of Schizosaccharomyces pombe.</title>
        <authorList>
            <person name="Wood V."/>
            <person name="Gwilliam R."/>
            <person name="Rajandream M.A."/>
            <person name="Lyne M.H."/>
            <person name="Lyne R."/>
            <person name="Stewart A."/>
            <person name="Sgouros J.G."/>
            <person name="Peat N."/>
            <person name="Hayles J."/>
            <person name="Baker S.G."/>
            <person name="Basham D."/>
            <person name="Bowman S."/>
            <person name="Brooks K."/>
            <person name="Brown D."/>
            <person name="Brown S."/>
            <person name="Chillingworth T."/>
            <person name="Churcher C.M."/>
            <person name="Collins M."/>
            <person name="Connor R."/>
            <person name="Cronin A."/>
            <person name="Davis P."/>
            <person name="Feltwell T."/>
            <person name="Fraser A."/>
            <person name="Gentles S."/>
            <person name="Goble A."/>
            <person name="Hamlin N."/>
            <person name="Harris D.E."/>
            <person name="Hidalgo J."/>
            <person name="Hodgson G."/>
            <person name="Holroyd S."/>
            <person name="Hornsby T."/>
            <person name="Howarth S."/>
            <person name="Huckle E.J."/>
            <person name="Hunt S."/>
            <person name="Jagels K."/>
            <person name="James K.D."/>
            <person name="Jones L."/>
            <person name="Jones M."/>
            <person name="Leather S."/>
            <person name="McDonald S."/>
            <person name="McLean J."/>
            <person name="Mooney P."/>
            <person name="Moule S."/>
            <person name="Mungall K.L."/>
            <person name="Murphy L.D."/>
            <person name="Niblett D."/>
            <person name="Odell C."/>
            <person name="Oliver K."/>
            <person name="O'Neil S."/>
            <person name="Pearson D."/>
            <person name="Quail M.A."/>
            <person name="Rabbinowitsch E."/>
            <person name="Rutherford K.M."/>
            <person name="Rutter S."/>
            <person name="Saunders D."/>
            <person name="Seeger K."/>
            <person name="Sharp S."/>
            <person name="Skelton J."/>
            <person name="Simmonds M.N."/>
            <person name="Squares R."/>
            <person name="Squares S."/>
            <person name="Stevens K."/>
            <person name="Taylor K."/>
            <person name="Taylor R.G."/>
            <person name="Tivey A."/>
            <person name="Walsh S.V."/>
            <person name="Warren T."/>
            <person name="Whitehead S."/>
            <person name="Woodward J.R."/>
            <person name="Volckaert G."/>
            <person name="Aert R."/>
            <person name="Robben J."/>
            <person name="Grymonprez B."/>
            <person name="Weltjens I."/>
            <person name="Vanstreels E."/>
            <person name="Rieger M."/>
            <person name="Schaefer M."/>
            <person name="Mueller-Auer S."/>
            <person name="Gabel C."/>
            <person name="Fuchs M."/>
            <person name="Duesterhoeft A."/>
            <person name="Fritzc C."/>
            <person name="Holzer E."/>
            <person name="Moestl D."/>
            <person name="Hilbert H."/>
            <person name="Borzym K."/>
            <person name="Langer I."/>
            <person name="Beck A."/>
            <person name="Lehrach H."/>
            <person name="Reinhardt R."/>
            <person name="Pohl T.M."/>
            <person name="Eger P."/>
            <person name="Zimmermann W."/>
            <person name="Wedler H."/>
            <person name="Wambutt R."/>
            <person name="Purnelle B."/>
            <person name="Goffeau A."/>
            <person name="Cadieu E."/>
            <person name="Dreano S."/>
            <person name="Gloux S."/>
            <person name="Lelaure V."/>
            <person name="Mottier S."/>
            <person name="Galibert F."/>
            <person name="Aves S.J."/>
            <person name="Xiang Z."/>
            <person name="Hunt C."/>
            <person name="Moore K."/>
            <person name="Hurst S.M."/>
            <person name="Lucas M."/>
            <person name="Rochet M."/>
            <person name="Gaillardin C."/>
            <person name="Tallada V.A."/>
            <person name="Garzon A."/>
            <person name="Thode G."/>
            <person name="Daga R.R."/>
            <person name="Cruzado L."/>
            <person name="Jimenez J."/>
            <person name="Sanchez M."/>
            <person name="del Rey F."/>
            <person name="Benito J."/>
            <person name="Dominguez A."/>
            <person name="Revuelta J.L."/>
            <person name="Moreno S."/>
            <person name="Armstrong J."/>
            <person name="Forsburg S.L."/>
            <person name="Cerutti L."/>
            <person name="Lowe T."/>
            <person name="McCombie W.R."/>
            <person name="Paulsen I."/>
            <person name="Potashkin J."/>
            <person name="Shpakovski G.V."/>
            <person name="Ussery D."/>
            <person name="Barrell B.G."/>
            <person name="Nurse P."/>
        </authorList>
    </citation>
    <scope>NUCLEOTIDE SEQUENCE [LARGE SCALE GENOMIC DNA]</scope>
    <source>
        <strain>972 / ATCC 24843</strain>
    </source>
</reference>
<reference key="2">
    <citation type="journal article" date="1999" name="Nat. Genet.">
        <title>Involvement of nucleotide-excision repair in msh2 pms1-independent mismatch repair.</title>
        <authorList>
            <person name="Fleck O."/>
            <person name="Lehmann E."/>
            <person name="Schaer P."/>
            <person name="Kohli J."/>
        </authorList>
    </citation>
    <scope>FUNCTION</scope>
</reference>
<reference key="3">
    <citation type="journal article" date="2001" name="J. Biol. Chem.">
        <title>Binding and repair of mismatched DNA mediated by Rhp14, the fission yeast homologue of human XPA.</title>
        <authorList>
            <person name="Hohl M."/>
            <person name="Christensen O."/>
            <person name="Kunz C."/>
            <person name="Naegeli H."/>
            <person name="Fleck O."/>
        </authorList>
    </citation>
    <scope>FUNCTION</scope>
</reference>
<reference key="4">
    <citation type="journal article" date="2012" name="Mol. Cell. Biol.">
        <title>The RecQ4 orthologue Hrq1 is critical for DNA interstrand cross-link repair and genome stability in fission yeast.</title>
        <authorList>
            <person name="Groocock L.M."/>
            <person name="Prudden J."/>
            <person name="Perry J.J."/>
            <person name="Boddy M.N."/>
        </authorList>
    </citation>
    <scope>FUNCTION</scope>
    <scope>INTERACTION WITH HRQ1</scope>
</reference>
<comment type="function">
    <text evidence="3 4 5">Involved in nucleotide excision repair (NER). Functional in repair of ultraviolet radiation induced damages and in mitotic mutation avoidance. Binds damaged DNA. Binds specifically to base-base mismatches or small insertion/deletion loops with unpaired nucleotides. Maintains GT repeat stability. Functions as a part of the short-patch excision repair system.</text>
</comment>
<comment type="subunit">
    <text evidence="5">Interacts with hrq1.</text>
</comment>
<comment type="subcellular location">
    <subcellularLocation>
        <location evidence="1">Nucleus</location>
    </subcellularLocation>
</comment>
<comment type="similarity">
    <text evidence="2">Belongs to the XPA family.</text>
</comment>
<feature type="chain" id="PRO_0000274248" description="DNA repair protein rad14">
    <location>
        <begin position="1"/>
        <end position="289"/>
    </location>
</feature>
<feature type="zinc finger region" evidence="1">
    <location>
        <begin position="116"/>
        <end position="140"/>
    </location>
</feature>
<feature type="binding site" evidence="1">
    <location>
        <position position="116"/>
    </location>
    <ligand>
        <name>Zn(2+)</name>
        <dbReference type="ChEBI" id="CHEBI:29105"/>
    </ligand>
</feature>
<feature type="binding site" evidence="1">
    <location>
        <position position="119"/>
    </location>
    <ligand>
        <name>Zn(2+)</name>
        <dbReference type="ChEBI" id="CHEBI:29105"/>
    </ligand>
</feature>
<feature type="binding site" evidence="1">
    <location>
        <position position="137"/>
    </location>
    <ligand>
        <name>Zn(2+)</name>
        <dbReference type="ChEBI" id="CHEBI:29105"/>
    </ligand>
</feature>
<feature type="binding site" evidence="1">
    <location>
        <position position="140"/>
    </location>
    <ligand>
        <name>Zn(2+)</name>
        <dbReference type="ChEBI" id="CHEBI:29105"/>
    </ligand>
</feature>
<dbReference type="EMBL" id="CU329671">
    <property type="protein sequence ID" value="CAA19045.1"/>
    <property type="molecule type" value="Genomic_DNA"/>
</dbReference>
<dbReference type="PIR" id="T40596">
    <property type="entry name" value="T40596"/>
</dbReference>
<dbReference type="RefSeq" id="NP_595222.1">
    <property type="nucleotide sequence ID" value="NM_001021128.2"/>
</dbReference>
<dbReference type="SMR" id="O59753"/>
<dbReference type="BioGRID" id="277635">
    <property type="interactions" value="100"/>
</dbReference>
<dbReference type="FunCoup" id="O59753">
    <property type="interactions" value="253"/>
</dbReference>
<dbReference type="STRING" id="284812.O59753"/>
<dbReference type="iPTMnet" id="O59753"/>
<dbReference type="PaxDb" id="4896-SPBC649.03.1"/>
<dbReference type="EnsemblFungi" id="SPBC649.03.1">
    <property type="protein sequence ID" value="SPBC649.03.1:pep"/>
    <property type="gene ID" value="SPBC649.03"/>
</dbReference>
<dbReference type="GeneID" id="2541120"/>
<dbReference type="KEGG" id="spo:2541120"/>
<dbReference type="PomBase" id="SPBC649.03">
    <property type="gene designation" value="rhp14"/>
</dbReference>
<dbReference type="VEuPathDB" id="FungiDB:SPBC649.03"/>
<dbReference type="eggNOG" id="KOG4017">
    <property type="taxonomic scope" value="Eukaryota"/>
</dbReference>
<dbReference type="HOGENOM" id="CLU_053731_0_1_1"/>
<dbReference type="InParanoid" id="O59753"/>
<dbReference type="OMA" id="EFGEDTY"/>
<dbReference type="PhylomeDB" id="O59753"/>
<dbReference type="Reactome" id="R-SPO-5696395">
    <property type="pathway name" value="Formation of Incision Complex in GG-NER"/>
</dbReference>
<dbReference type="Reactome" id="R-SPO-5696400">
    <property type="pathway name" value="Dual Incision in GG-NER"/>
</dbReference>
<dbReference type="Reactome" id="R-SPO-6781823">
    <property type="pathway name" value="Formation of TC-NER Pre-Incision Complex"/>
</dbReference>
<dbReference type="Reactome" id="R-SPO-6782135">
    <property type="pathway name" value="Dual incision in TC-NER"/>
</dbReference>
<dbReference type="PRO" id="PR:O59753"/>
<dbReference type="Proteomes" id="UP000002485">
    <property type="component" value="Chromosome II"/>
</dbReference>
<dbReference type="GO" id="GO:0000110">
    <property type="term" value="C:nucleotide-excision repair factor 1 complex"/>
    <property type="evidence" value="ECO:0000318"/>
    <property type="project" value="GO_Central"/>
</dbReference>
<dbReference type="GO" id="GO:0003684">
    <property type="term" value="F:damaged DNA binding"/>
    <property type="evidence" value="ECO:0000318"/>
    <property type="project" value="GO_Central"/>
</dbReference>
<dbReference type="GO" id="GO:0008270">
    <property type="term" value="F:zinc ion binding"/>
    <property type="evidence" value="ECO:0007669"/>
    <property type="project" value="UniProtKB-KW"/>
</dbReference>
<dbReference type="GO" id="GO:0006284">
    <property type="term" value="P:base-excision repair"/>
    <property type="evidence" value="ECO:0000318"/>
    <property type="project" value="GO_Central"/>
</dbReference>
<dbReference type="GO" id="GO:0006289">
    <property type="term" value="P:nucleotide-excision repair"/>
    <property type="evidence" value="ECO:0000316"/>
    <property type="project" value="PomBase"/>
</dbReference>
<dbReference type="GO" id="GO:1901255">
    <property type="term" value="P:nucleotide-excision repair involved in interstrand cross-link repair"/>
    <property type="evidence" value="ECO:0000315"/>
    <property type="project" value="PomBase"/>
</dbReference>
<dbReference type="GO" id="GO:0000715">
    <property type="term" value="P:nucleotide-excision repair, DNA damage recognition"/>
    <property type="evidence" value="ECO:0000318"/>
    <property type="project" value="GO_Central"/>
</dbReference>
<dbReference type="GO" id="GO:0070914">
    <property type="term" value="P:UV-damage excision repair"/>
    <property type="evidence" value="ECO:0000315"/>
    <property type="project" value="PomBase"/>
</dbReference>
<dbReference type="CDD" id="cd21077">
    <property type="entry name" value="DBD_Rad14"/>
    <property type="match status" value="1"/>
</dbReference>
<dbReference type="FunFam" id="3.90.530.10:FF:000003">
    <property type="entry name" value="Dna repair rad14 protein"/>
    <property type="match status" value="1"/>
</dbReference>
<dbReference type="Gene3D" id="3.90.530.10">
    <property type="entry name" value="XPA C-terminal domain"/>
    <property type="match status" value="1"/>
</dbReference>
<dbReference type="InterPro" id="IPR009061">
    <property type="entry name" value="DNA-bd_dom_put_sf"/>
</dbReference>
<dbReference type="InterPro" id="IPR000465">
    <property type="entry name" value="XPA/RAD14"/>
</dbReference>
<dbReference type="InterPro" id="IPR022656">
    <property type="entry name" value="XPA_C"/>
</dbReference>
<dbReference type="InterPro" id="IPR037129">
    <property type="entry name" value="XPA_sf"/>
</dbReference>
<dbReference type="InterPro" id="IPR022652">
    <property type="entry name" value="Znf_XPA_CS"/>
</dbReference>
<dbReference type="NCBIfam" id="TIGR00598">
    <property type="entry name" value="rad14"/>
    <property type="match status" value="1"/>
</dbReference>
<dbReference type="PANTHER" id="PTHR10142">
    <property type="entry name" value="DNA REPAIR PROTEIN COMPLEMENTING XP-A CELLS"/>
    <property type="match status" value="1"/>
</dbReference>
<dbReference type="PANTHER" id="PTHR10142:SF0">
    <property type="entry name" value="DNA REPAIR PROTEIN COMPLEMENTING XP-A CELLS"/>
    <property type="match status" value="1"/>
</dbReference>
<dbReference type="Pfam" id="PF05181">
    <property type="entry name" value="XPA_C"/>
    <property type="match status" value="1"/>
</dbReference>
<dbReference type="Pfam" id="PF01286">
    <property type="entry name" value="XPA_N"/>
    <property type="match status" value="1"/>
</dbReference>
<dbReference type="SUPFAM" id="SSF46955">
    <property type="entry name" value="Putative DNA-binding domain"/>
    <property type="match status" value="1"/>
</dbReference>
<protein>
    <recommendedName>
        <fullName evidence="7">DNA repair protein rad14</fullName>
    </recommendedName>
    <alternativeName>
        <fullName evidence="6">XP-A family homolog rhp14</fullName>
    </alternativeName>
</protein>
<evidence type="ECO:0000250" key="1">
    <source>
        <dbReference type="UniProtKB" id="P28519"/>
    </source>
</evidence>
<evidence type="ECO:0000255" key="2"/>
<evidence type="ECO:0000269" key="3">
    <source>
    </source>
</evidence>
<evidence type="ECO:0000269" key="4">
    <source>
    </source>
</evidence>
<evidence type="ECO:0000269" key="5">
    <source>
    </source>
</evidence>
<evidence type="ECO:0000303" key="6">
    <source>
    </source>
</evidence>
<evidence type="ECO:0000305" key="7"/>
<evidence type="ECO:0000312" key="8">
    <source>
        <dbReference type="PomBase" id="SPBC649.03"/>
    </source>
</evidence>
<gene>
    <name evidence="6" type="primary">rhp14</name>
    <name evidence="8" type="synonym">rad14</name>
    <name evidence="8" type="ORF">SPBC649.03</name>
</gene>
<proteinExistence type="evidence at protein level"/>